<name>MIG10_CAEEL</name>
<comment type="function">
    <text evidence="4 5 6">Required cell non-autonomously for proper development of the excretory canals and for the long-range anterior-posterior migrations of embryonic neurons CAN, ALM and HSN (PubMed:2361334, PubMed:9142991). Plays a role, probably downstream of ced-10/rac1, in orientating axonal growth of HSN and AVM neurons in response to guidance cues such as slt-1 (PubMed:18499456). May regulate growth cone polarization by promoting asymmetric F-actin assembly (PubMed:18499456). May be involved in signal transduction during cell migration (PubMed:9142991).</text>
</comment>
<comment type="subunit">
    <text evidence="4">May interact (via Ras-associating and PH domains) with ced-10 (GTP-bound form).</text>
</comment>
<comment type="interaction">
    <interactant intactId="EBI-2315872">
        <id>P34400</id>
    </interactant>
    <interactant intactId="EBI-315750">
        <id>Q10929</id>
        <label>abi-1</label>
    </interactant>
    <organismsDiffer>false</organismsDiffer>
    <experiments>6</experiments>
</comment>
<comment type="interaction">
    <interactant intactId="EBI-2315872">
        <id>P34400</id>
    </interactant>
    <interactant intactId="EBI-325337">
        <id>G5EC32</id>
        <label>sorb-1</label>
    </interactant>
    <organismsDiffer>false</organismsDiffer>
    <experiments>7</experiments>
</comment>
<comment type="subcellular location">
    <subcellularLocation>
        <location evidence="4">Perikaryon</location>
    </subcellularLocation>
    <text evidence="4">Enriched at the ventral edge of HSN cell bodies. This asymmetric distribution is regulated by ced-10/rac1.</text>
</comment>
<comment type="alternative products">
    <event type="alternative splicing"/>
    <isoform>
        <id>P34400-3</id>
        <name evidence="11">c</name>
        <sequence type="displayed"/>
    </isoform>
    <isoform>
        <id>P34400-1</id>
        <name evidence="9">a</name>
        <sequence type="described" ref="VSP_014008"/>
    </isoform>
    <isoform>
        <id>P34400-2</id>
        <name evidence="10">b</name>
        <sequence type="described" ref="VSP_008867 VSP_014009"/>
    </isoform>
</comment>
<comment type="disruption phenotype">
    <text evidence="4">Defects in axon guidance in HSN neurons although axons reach the ventral nerve cord in the end. In max-2 and mig-10 double mutants, the phenotype is more severe resulting in axons failing to reach the ventral nerve cord.</text>
</comment>
<comment type="similarity">
    <text evidence="8">Belongs to the MRL family.</text>
</comment>
<evidence type="ECO:0000255" key="1">
    <source>
        <dbReference type="PROSITE-ProRule" id="PRU00145"/>
    </source>
</evidence>
<evidence type="ECO:0000255" key="2">
    <source>
        <dbReference type="PROSITE-ProRule" id="PRU00166"/>
    </source>
</evidence>
<evidence type="ECO:0000256" key="3">
    <source>
        <dbReference type="SAM" id="MobiDB-lite"/>
    </source>
</evidence>
<evidence type="ECO:0000269" key="4">
    <source>
    </source>
</evidence>
<evidence type="ECO:0000269" key="5">
    <source>
    </source>
</evidence>
<evidence type="ECO:0000269" key="6">
    <source>
    </source>
</evidence>
<evidence type="ECO:0000303" key="7">
    <source>
    </source>
</evidence>
<evidence type="ECO:0000305" key="8"/>
<evidence type="ECO:0000312" key="9">
    <source>
        <dbReference type="WormBase" id="F10E9.6a"/>
    </source>
</evidence>
<evidence type="ECO:0000312" key="10">
    <source>
        <dbReference type="WormBase" id="F10E9.6b"/>
    </source>
</evidence>
<evidence type="ECO:0000312" key="11">
    <source>
        <dbReference type="WormBase" id="F10E9.6c"/>
    </source>
</evidence>
<sequence>MDSCEEECDLEVDSDEEDQLFGEKCISLLSSLLPLSSSTLLSNAINLELDEVERPPPLLNVLEEQQFPKVCANIEEENELEADTEEDIAETADDEESKDPVEKTENFEPSVTMDTYDFPDPYPVQIRARPQVPPKPPIDTVRYSMNNIKESADWQLDELLEELEALETQLNSSNGGDQLLLGVSGIPASSSRENVKSISTLPPPPPALSYHQTPQQPQLLHHHNNHLGYQNGIHQITSINSAASSCSSPDGDSAFGDSSSTESSNNRCRNSAFSSNDSCRDSLNTPSPTQVSPRNGELNAEEAKAQKIRQALEKMKEAKVTKIFVKFFVEDGEALQLLIDERWTVADTLKQLAEKNHIALMEDHCIVEEYPELYIKRVYEDHEKVVENIQMWVQDSPNKLYFMRRPDKYAFISRPELYLLTPKTSDHMEIPSGDQWTIDVKQKFVSEYFHREPVVPPEMEGFLYLKSDGRKSWKKHYFVLRPSGLYYAPKSKKPTTKDLTCLMNLHSNQVYTGIGWEKKYKSPTPWCISIKLTALQMKRSQFIKYICAEDEMTFKKWLVALRIAKNGAELLENYERACQIRRETLGPASSMSAASSSTAISEVPHSLSHHQRTPSVASSIQLSSHMMNNPTHPLSVNVRNQSPASFSVNSCQQSHPSRTSAKLEIQYDEQPTGTIKRAPLDVLRRVSRASTSSPTIPQEESDSDEEFPAPPPVASVMRMPPPVTPPKPCTPLTSKKAPPPPPKRSDTTKLQSASPMAPAKNDLEAALARRREKMATMEC</sequence>
<gene>
    <name evidence="11" type="primary">mig-10</name>
    <name evidence="11" type="ORF">F10E9.6</name>
</gene>
<organism>
    <name type="scientific">Caenorhabditis elegans</name>
    <dbReference type="NCBI Taxonomy" id="6239"/>
    <lineage>
        <taxon>Eukaryota</taxon>
        <taxon>Metazoa</taxon>
        <taxon>Ecdysozoa</taxon>
        <taxon>Nematoda</taxon>
        <taxon>Chromadorea</taxon>
        <taxon>Rhabditida</taxon>
        <taxon>Rhabditina</taxon>
        <taxon>Rhabditomorpha</taxon>
        <taxon>Rhabditoidea</taxon>
        <taxon>Rhabditidae</taxon>
        <taxon>Peloderinae</taxon>
        <taxon>Caenorhabditis</taxon>
    </lineage>
</organism>
<accession>P34400</accession>
<accession>P34386</accession>
<accession>P34403</accession>
<accession>Q7JQ80</accession>
<accession>Q8WT53</accession>
<proteinExistence type="evidence at protein level"/>
<feature type="chain" id="PRO_0000181353" description="Abnormal cell migration protein 10">
    <location>
        <begin position="1"/>
        <end position="779"/>
    </location>
</feature>
<feature type="domain" description="Ras-associating" evidence="2">
    <location>
        <begin position="317"/>
        <end position="407"/>
    </location>
</feature>
<feature type="domain" description="PH" evidence="1">
    <location>
        <begin position="456"/>
        <end position="566"/>
    </location>
</feature>
<feature type="region of interest" description="Disordered" evidence="3">
    <location>
        <begin position="78"/>
        <end position="105"/>
    </location>
</feature>
<feature type="region of interest" description="Disordered" evidence="3">
    <location>
        <begin position="189"/>
        <end position="217"/>
    </location>
</feature>
<feature type="region of interest" description="Disordered" evidence="3">
    <location>
        <begin position="242"/>
        <end position="302"/>
    </location>
</feature>
<feature type="region of interest" description="Disordered" evidence="3">
    <location>
        <begin position="645"/>
        <end position="763"/>
    </location>
</feature>
<feature type="compositionally biased region" description="Acidic residues" evidence="3">
    <location>
        <begin position="78"/>
        <end position="97"/>
    </location>
</feature>
<feature type="compositionally biased region" description="Polar residues" evidence="3">
    <location>
        <begin position="189"/>
        <end position="200"/>
    </location>
</feature>
<feature type="compositionally biased region" description="Low complexity" evidence="3">
    <location>
        <begin position="242"/>
        <end position="254"/>
    </location>
</feature>
<feature type="compositionally biased region" description="Polar residues" evidence="3">
    <location>
        <begin position="256"/>
        <end position="293"/>
    </location>
</feature>
<feature type="compositionally biased region" description="Polar residues" evidence="3">
    <location>
        <begin position="645"/>
        <end position="660"/>
    </location>
</feature>
<feature type="compositionally biased region" description="Polar residues" evidence="3">
    <location>
        <begin position="688"/>
        <end position="698"/>
    </location>
</feature>
<feature type="compositionally biased region" description="Pro residues" evidence="3">
    <location>
        <begin position="708"/>
        <end position="729"/>
    </location>
</feature>
<feature type="splice variant" id="VSP_008867" description="In isoform b." evidence="7">
    <location>
        <begin position="1"/>
        <end position="129"/>
    </location>
</feature>
<feature type="splice variant" id="VSP_014008" description="In isoform a." evidence="7">
    <location>
        <begin position="1"/>
        <end position="112"/>
    </location>
</feature>
<feature type="splice variant" id="VSP_014009" description="In isoform b." evidence="7">
    <original>PQVPPKPPIDTVRYSMNNIKE</original>
    <variation>MYHDRRRTGFRQYETYMKQKQ</variation>
    <location>
        <begin position="130"/>
        <end position="150"/>
    </location>
</feature>
<protein>
    <recommendedName>
        <fullName>Abnormal cell migration protein 10</fullName>
    </recommendedName>
</protein>
<keyword id="KW-0025">Alternative splicing</keyword>
<keyword id="KW-0217">Developmental protein</keyword>
<keyword id="KW-0524">Neurogenesis</keyword>
<keyword id="KW-1185">Reference proteome</keyword>
<reference key="1">
    <citation type="journal article" date="1997" name="Dev. Biol.">
        <title>C. elegans cell migration gene mig-10 shares similarities with a family of SH2 domain proteins and acts cell nonautonomously in excretory canal development.</title>
        <authorList>
            <person name="Manser J."/>
            <person name="Roonprapunt C."/>
            <person name="Margolis B."/>
        </authorList>
    </citation>
    <scope>NUCLEOTIDE SEQUENCE [MRNA] (ISOFORMS A AND B)</scope>
    <scope>FUNCTION</scope>
</reference>
<reference key="2">
    <citation type="journal article" date="1994" name="Nature">
        <title>2.2 Mb of contiguous nucleotide sequence from chromosome III of C. elegans.</title>
        <authorList>
            <person name="Wilson R."/>
            <person name="Ainscough R."/>
            <person name="Anderson K."/>
            <person name="Baynes C."/>
            <person name="Berks M."/>
            <person name="Bonfield J."/>
            <person name="Burton J."/>
            <person name="Connell M."/>
            <person name="Copsey T."/>
            <person name="Cooper J."/>
            <person name="Coulson A."/>
            <person name="Craxton M."/>
            <person name="Dear S."/>
            <person name="Du Z."/>
            <person name="Durbin R."/>
            <person name="Favello A."/>
            <person name="Fraser A."/>
            <person name="Fulton L."/>
            <person name="Gardner A."/>
            <person name="Green P."/>
            <person name="Hawkins T."/>
            <person name="Hillier L."/>
            <person name="Jier M."/>
            <person name="Johnston L."/>
            <person name="Jones M."/>
            <person name="Kershaw J."/>
            <person name="Kirsten J."/>
            <person name="Laisster N."/>
            <person name="Latreille P."/>
            <person name="Lightning J."/>
            <person name="Lloyd C."/>
            <person name="Mortimore B."/>
            <person name="O'Callaghan M."/>
            <person name="Parsons J."/>
            <person name="Percy C."/>
            <person name="Rifken L."/>
            <person name="Roopra A."/>
            <person name="Saunders D."/>
            <person name="Shownkeen R."/>
            <person name="Sims M."/>
            <person name="Smaldon N."/>
            <person name="Smith A."/>
            <person name="Smith M."/>
            <person name="Sonnhammer E."/>
            <person name="Staden R."/>
            <person name="Sulston J."/>
            <person name="Thierry-Mieg J."/>
            <person name="Thomas K."/>
            <person name="Vaudin M."/>
            <person name="Vaughan K."/>
            <person name="Waterston R."/>
            <person name="Watson A."/>
            <person name="Weinstock L."/>
            <person name="Wilkinson-Sproat J."/>
            <person name="Wohldman P."/>
        </authorList>
    </citation>
    <scope>NUCLEOTIDE SEQUENCE [LARGE SCALE GENOMIC DNA]</scope>
    <source>
        <strain>Bristol N2</strain>
    </source>
</reference>
<reference key="3">
    <citation type="journal article" date="1998" name="Science">
        <title>Genome sequence of the nematode C. elegans: a platform for investigating biology.</title>
        <authorList>
            <consortium name="The C. elegans sequencing consortium"/>
        </authorList>
    </citation>
    <scope>NUCLEOTIDE SEQUENCE [LARGE SCALE GENOMIC DNA]</scope>
    <source>
        <strain>Bristol N2</strain>
    </source>
</reference>
<reference key="4">
    <citation type="journal article" date="1990" name="Dev. Genet.">
        <title>Mutations affecting embryonic cell migrations in Caenorhabditis elegans.</title>
        <authorList>
            <person name="Manser J."/>
            <person name="Wood W.B."/>
        </authorList>
    </citation>
    <scope>FUNCTION</scope>
</reference>
<reference key="5">
    <citation type="journal article" date="2008" name="Curr. Biol.">
        <title>CED-10/Rac1 mediates axon guidance by regulating the asymmetric distribution of MIG-10/lamellipodin.</title>
        <authorList>
            <person name="Quinn C.C."/>
            <person name="Pfeil D.S."/>
            <person name="Wadsworth W.G."/>
        </authorList>
    </citation>
    <scope>FUNCTION</scope>
    <scope>INTERACTION WITH CED-10</scope>
    <scope>SUBCELLULAR LOCATION</scope>
    <scope>DISRUPTION PHENOTYPE</scope>
</reference>
<dbReference type="EMBL" id="BX284603">
    <property type="protein sequence ID" value="CCD69133.1"/>
    <property type="molecule type" value="Genomic_DNA"/>
</dbReference>
<dbReference type="EMBL" id="BX284603">
    <property type="protein sequence ID" value="CCD69132.1"/>
    <property type="molecule type" value="Genomic_DNA"/>
</dbReference>
<dbReference type="EMBL" id="BX284603">
    <property type="protein sequence ID" value="CCD69134.1"/>
    <property type="molecule type" value="Genomic_DNA"/>
</dbReference>
<dbReference type="PIR" id="S44806">
    <property type="entry name" value="S44806"/>
</dbReference>
<dbReference type="RefSeq" id="NP_001021248.1">
    <property type="nucleotide sequence ID" value="NM_001026077.4"/>
</dbReference>
<dbReference type="RefSeq" id="NP_001367746.1">
    <molecule id="P34400-3"/>
    <property type="nucleotide sequence ID" value="NM_001379826.1"/>
</dbReference>
<dbReference type="RefSeq" id="NP_001370647.1">
    <molecule id="P34400-1"/>
    <property type="nucleotide sequence ID" value="NM_001382935.2"/>
</dbReference>
<dbReference type="RefSeq" id="NP_498821.2">
    <molecule id="P34400-2"/>
    <property type="nucleotide sequence ID" value="NM_066420.6"/>
</dbReference>
<dbReference type="RefSeq" id="NP_498822.2">
    <property type="nucleotide sequence ID" value="NM_066421.3"/>
</dbReference>
<dbReference type="SMR" id="P34400"/>
<dbReference type="BioGRID" id="41372">
    <property type="interactions" value="12"/>
</dbReference>
<dbReference type="FunCoup" id="P34400">
    <property type="interactions" value="4"/>
</dbReference>
<dbReference type="IntAct" id="P34400">
    <property type="interactions" value="6"/>
</dbReference>
<dbReference type="STRING" id="6239.F10E9.6c.2"/>
<dbReference type="iPTMnet" id="P34400"/>
<dbReference type="PaxDb" id="6239-F10E9.6c"/>
<dbReference type="PeptideAtlas" id="P34400"/>
<dbReference type="EnsemblMetazoa" id="F10E9.6a.1">
    <molecule id="P34400-1"/>
    <property type="protein sequence ID" value="F10E9.6a.1"/>
    <property type="gene ID" value="WBGene00003243"/>
</dbReference>
<dbReference type="EnsemblMetazoa" id="F10E9.6a.2">
    <molecule id="P34400-1"/>
    <property type="protein sequence ID" value="F10E9.6a.2"/>
    <property type="gene ID" value="WBGene00003243"/>
</dbReference>
<dbReference type="EnsemblMetazoa" id="F10E9.6a.3">
    <molecule id="P34400-1"/>
    <property type="protein sequence ID" value="F10E9.6a.3"/>
    <property type="gene ID" value="WBGene00003243"/>
</dbReference>
<dbReference type="EnsemblMetazoa" id="F10E9.6b.1">
    <molecule id="P34400-2"/>
    <property type="protein sequence ID" value="F10E9.6b.1"/>
    <property type="gene ID" value="WBGene00003243"/>
</dbReference>
<dbReference type="EnsemblMetazoa" id="F10E9.6c.1">
    <molecule id="P34400-3"/>
    <property type="protein sequence ID" value="F10E9.6c.1"/>
    <property type="gene ID" value="WBGene00003243"/>
</dbReference>
<dbReference type="GeneID" id="176168"/>
<dbReference type="KEGG" id="cel:CELE_F10E9.6"/>
<dbReference type="UCSC" id="F10E9.6c">
    <molecule id="P34400-1"/>
    <property type="organism name" value="c. elegans"/>
</dbReference>
<dbReference type="AGR" id="WB:WBGene00003243"/>
<dbReference type="CTD" id="176168"/>
<dbReference type="WormBase" id="F10E9.6a">
    <molecule id="P34400-1"/>
    <property type="protein sequence ID" value="CE29261"/>
    <property type="gene ID" value="WBGene00003243"/>
    <property type="gene designation" value="mig-10"/>
</dbReference>
<dbReference type="WormBase" id="F10E9.6b">
    <molecule id="P34400-2"/>
    <property type="protein sequence ID" value="CE00150"/>
    <property type="gene ID" value="WBGene00003243"/>
    <property type="gene designation" value="mig-10"/>
</dbReference>
<dbReference type="WormBase" id="F10E9.6c">
    <molecule id="P34400-3"/>
    <property type="protein sequence ID" value="CE36129"/>
    <property type="gene ID" value="WBGene00003243"/>
    <property type="gene designation" value="mig-10"/>
</dbReference>
<dbReference type="eggNOG" id="KOG3751">
    <property type="taxonomic scope" value="Eukaryota"/>
</dbReference>
<dbReference type="GeneTree" id="ENSGT00940000171020"/>
<dbReference type="InParanoid" id="P34400"/>
<dbReference type="OMA" id="CCDDQAT"/>
<dbReference type="OrthoDB" id="6235964at2759"/>
<dbReference type="Reactome" id="R-CEL-354192">
    <property type="pathway name" value="Integrin signaling"/>
</dbReference>
<dbReference type="Reactome" id="R-CEL-354194">
    <property type="pathway name" value="GRB2:SOS provides linkage to MAPK signaling for Integrins"/>
</dbReference>
<dbReference type="Reactome" id="R-CEL-5674135">
    <property type="pathway name" value="MAP2K and MAPK activation"/>
</dbReference>
<dbReference type="SignaLink" id="P34400"/>
<dbReference type="PRO" id="PR:P34400"/>
<dbReference type="Proteomes" id="UP000001940">
    <property type="component" value="Chromosome III"/>
</dbReference>
<dbReference type="Bgee" id="WBGene00003243">
    <property type="expression patterns" value="Expressed in pharyngeal muscle cell (C elegans) and 3 other cell types or tissues"/>
</dbReference>
<dbReference type="GO" id="GO:0031941">
    <property type="term" value="C:filamentous actin"/>
    <property type="evidence" value="ECO:0000314"/>
    <property type="project" value="WormBase"/>
</dbReference>
<dbReference type="GO" id="GO:0032584">
    <property type="term" value="C:growth cone membrane"/>
    <property type="evidence" value="ECO:0000314"/>
    <property type="project" value="WormBase"/>
</dbReference>
<dbReference type="GO" id="GO:0030027">
    <property type="term" value="C:lamellipodium"/>
    <property type="evidence" value="ECO:0000314"/>
    <property type="project" value="WormBase"/>
</dbReference>
<dbReference type="GO" id="GO:0032809">
    <property type="term" value="C:neuronal cell body membrane"/>
    <property type="evidence" value="ECO:0000314"/>
    <property type="project" value="WormBase"/>
</dbReference>
<dbReference type="GO" id="GO:0043204">
    <property type="term" value="C:perikaryon"/>
    <property type="evidence" value="ECO:0007669"/>
    <property type="project" value="UniProtKB-SubCell"/>
</dbReference>
<dbReference type="GO" id="GO:0099523">
    <property type="term" value="C:presynaptic cytosol"/>
    <property type="evidence" value="ECO:0000314"/>
    <property type="project" value="SynGO"/>
</dbReference>
<dbReference type="GO" id="GO:0017124">
    <property type="term" value="F:SH3 domain binding"/>
    <property type="evidence" value="ECO:0000353"/>
    <property type="project" value="WormBase"/>
</dbReference>
<dbReference type="GO" id="GO:0031103">
    <property type="term" value="P:axon regeneration"/>
    <property type="evidence" value="ECO:0000315"/>
    <property type="project" value="WormBase"/>
</dbReference>
<dbReference type="GO" id="GO:0048858">
    <property type="term" value="P:cell projection morphogenesis"/>
    <property type="evidence" value="ECO:0000315"/>
    <property type="project" value="WormBase"/>
</dbReference>
<dbReference type="GO" id="GO:0018991">
    <property type="term" value="P:egg-laying behavior"/>
    <property type="evidence" value="ECO:0000315"/>
    <property type="project" value="WormBase"/>
</dbReference>
<dbReference type="GO" id="GO:0030032">
    <property type="term" value="P:lamellipodium assembly"/>
    <property type="evidence" value="ECO:0000315"/>
    <property type="project" value="WormBase"/>
</dbReference>
<dbReference type="GO" id="GO:0040011">
    <property type="term" value="P:locomotion"/>
    <property type="evidence" value="ECO:0000315"/>
    <property type="project" value="WormBase"/>
</dbReference>
<dbReference type="GO" id="GO:0008078">
    <property type="term" value="P:mesodermal cell migration"/>
    <property type="evidence" value="ECO:0000315"/>
    <property type="project" value="WormBase"/>
</dbReference>
<dbReference type="GO" id="GO:0001764">
    <property type="term" value="P:neuron migration"/>
    <property type="evidence" value="ECO:0000315"/>
    <property type="project" value="WormBase"/>
</dbReference>
<dbReference type="GO" id="GO:0099054">
    <property type="term" value="P:presynapse assembly"/>
    <property type="evidence" value="ECO:0000314"/>
    <property type="project" value="SynGO"/>
</dbReference>
<dbReference type="GO" id="GO:0030334">
    <property type="term" value="P:regulation of cell migration"/>
    <property type="evidence" value="ECO:0000315"/>
    <property type="project" value="WormBase"/>
</dbReference>
<dbReference type="GO" id="GO:0007165">
    <property type="term" value="P:signal transduction"/>
    <property type="evidence" value="ECO:0007669"/>
    <property type="project" value="InterPro"/>
</dbReference>
<dbReference type="GO" id="GO:0040025">
    <property type="term" value="P:vulval development"/>
    <property type="evidence" value="ECO:0000315"/>
    <property type="project" value="WormBase"/>
</dbReference>
<dbReference type="CDD" id="cd01259">
    <property type="entry name" value="PH_APBB1IP"/>
    <property type="match status" value="1"/>
</dbReference>
<dbReference type="Gene3D" id="3.10.20.90">
    <property type="entry name" value="Phosphatidylinositol 3-kinase Catalytic Subunit, Chain A, domain 1"/>
    <property type="match status" value="1"/>
</dbReference>
<dbReference type="Gene3D" id="2.30.29.30">
    <property type="entry name" value="Pleckstrin-homology domain (PH domain)/Phosphotyrosine-binding domain (PTB)"/>
    <property type="match status" value="1"/>
</dbReference>
<dbReference type="InterPro" id="IPR039664">
    <property type="entry name" value="GRB/APBB1IP"/>
</dbReference>
<dbReference type="InterPro" id="IPR011993">
    <property type="entry name" value="PH-like_dom_sf"/>
</dbReference>
<dbReference type="InterPro" id="IPR039665">
    <property type="entry name" value="PH_APBB1IP"/>
</dbReference>
<dbReference type="InterPro" id="IPR001849">
    <property type="entry name" value="PH_domain"/>
</dbReference>
<dbReference type="InterPro" id="IPR000159">
    <property type="entry name" value="RA_dom"/>
</dbReference>
<dbReference type="InterPro" id="IPR029071">
    <property type="entry name" value="Ubiquitin-like_domsf"/>
</dbReference>
<dbReference type="PANTHER" id="PTHR11243">
    <property type="entry name" value="GROWTH FACTOR RECEPTOR-BOUND PROTEIN"/>
    <property type="match status" value="1"/>
</dbReference>
<dbReference type="PANTHER" id="PTHR11243:SF23">
    <property type="entry name" value="LD06925P"/>
    <property type="match status" value="1"/>
</dbReference>
<dbReference type="Pfam" id="PF00169">
    <property type="entry name" value="PH"/>
    <property type="match status" value="1"/>
</dbReference>
<dbReference type="Pfam" id="PF21989">
    <property type="entry name" value="RA_2"/>
    <property type="match status" value="1"/>
</dbReference>
<dbReference type="SMART" id="SM00233">
    <property type="entry name" value="PH"/>
    <property type="match status" value="1"/>
</dbReference>
<dbReference type="SMART" id="SM00314">
    <property type="entry name" value="RA"/>
    <property type="match status" value="1"/>
</dbReference>
<dbReference type="SUPFAM" id="SSF50729">
    <property type="entry name" value="PH domain-like"/>
    <property type="match status" value="1"/>
</dbReference>
<dbReference type="SUPFAM" id="SSF54236">
    <property type="entry name" value="Ubiquitin-like"/>
    <property type="match status" value="1"/>
</dbReference>
<dbReference type="PROSITE" id="PS50003">
    <property type="entry name" value="PH_DOMAIN"/>
    <property type="match status" value="1"/>
</dbReference>
<dbReference type="PROSITE" id="PS50200">
    <property type="entry name" value="RA"/>
    <property type="match status" value="1"/>
</dbReference>